<organism>
    <name type="scientific">Mannheimia succiniciproducens (strain KCTC 0769BP / MBEL55E)</name>
    <dbReference type="NCBI Taxonomy" id="221988"/>
    <lineage>
        <taxon>Bacteria</taxon>
        <taxon>Pseudomonadati</taxon>
        <taxon>Pseudomonadota</taxon>
        <taxon>Gammaproteobacteria</taxon>
        <taxon>Pasteurellales</taxon>
        <taxon>Pasteurellaceae</taxon>
        <taxon>Basfia</taxon>
    </lineage>
</organism>
<protein>
    <recommendedName>
        <fullName evidence="1">3-phosphoshikimate 1-carboxyvinyltransferase</fullName>
        <ecNumber evidence="1">2.5.1.19</ecNumber>
    </recommendedName>
    <alternativeName>
        <fullName evidence="1">5-enolpyruvylshikimate-3-phosphate synthase</fullName>
        <shortName evidence="1">EPSP synthase</shortName>
        <shortName evidence="1">EPSPS</shortName>
    </alternativeName>
</protein>
<comment type="function">
    <text evidence="1">Catalyzes the transfer of the enolpyruvyl moiety of phosphoenolpyruvate (PEP) to the 5-hydroxyl of shikimate-3-phosphate (S3P) to produce enolpyruvyl shikimate-3-phosphate and inorganic phosphate.</text>
</comment>
<comment type="catalytic activity">
    <reaction evidence="1">
        <text>3-phosphoshikimate + phosphoenolpyruvate = 5-O-(1-carboxyvinyl)-3-phosphoshikimate + phosphate</text>
        <dbReference type="Rhea" id="RHEA:21256"/>
        <dbReference type="ChEBI" id="CHEBI:43474"/>
        <dbReference type="ChEBI" id="CHEBI:57701"/>
        <dbReference type="ChEBI" id="CHEBI:58702"/>
        <dbReference type="ChEBI" id="CHEBI:145989"/>
        <dbReference type="EC" id="2.5.1.19"/>
    </reaction>
    <physiologicalReaction direction="left-to-right" evidence="1">
        <dbReference type="Rhea" id="RHEA:21257"/>
    </physiologicalReaction>
</comment>
<comment type="pathway">
    <text evidence="1">Metabolic intermediate biosynthesis; chorismate biosynthesis; chorismate from D-erythrose 4-phosphate and phosphoenolpyruvate: step 6/7.</text>
</comment>
<comment type="subunit">
    <text evidence="1">Monomer.</text>
</comment>
<comment type="subcellular location">
    <subcellularLocation>
        <location evidence="1">Cytoplasm</location>
    </subcellularLocation>
</comment>
<comment type="similarity">
    <text evidence="1">Belongs to the EPSP synthase family.</text>
</comment>
<name>AROA_MANSM</name>
<accession>Q65S78</accession>
<gene>
    <name evidence="1" type="primary">aroA</name>
    <name type="ordered locus">MS1575</name>
</gene>
<feature type="chain" id="PRO_1000012448" description="3-phosphoshikimate 1-carboxyvinyltransferase">
    <location>
        <begin position="1"/>
        <end position="433"/>
    </location>
</feature>
<feature type="active site" description="Proton acceptor" evidence="1">
    <location>
        <position position="318"/>
    </location>
</feature>
<feature type="binding site" evidence="1">
    <location>
        <position position="22"/>
    </location>
    <ligand>
        <name>3-phosphoshikimate</name>
        <dbReference type="ChEBI" id="CHEBI:145989"/>
    </ligand>
</feature>
<feature type="binding site" evidence="1">
    <location>
        <position position="22"/>
    </location>
    <ligand>
        <name>phosphoenolpyruvate</name>
        <dbReference type="ChEBI" id="CHEBI:58702"/>
    </ligand>
</feature>
<feature type="binding site" evidence="1">
    <location>
        <position position="23"/>
    </location>
    <ligand>
        <name>3-phosphoshikimate</name>
        <dbReference type="ChEBI" id="CHEBI:145989"/>
    </ligand>
</feature>
<feature type="binding site" evidence="1">
    <location>
        <position position="27"/>
    </location>
    <ligand>
        <name>3-phosphoshikimate</name>
        <dbReference type="ChEBI" id="CHEBI:145989"/>
    </ligand>
</feature>
<feature type="binding site" evidence="1">
    <location>
        <position position="96"/>
    </location>
    <ligand>
        <name>phosphoenolpyruvate</name>
        <dbReference type="ChEBI" id="CHEBI:58702"/>
    </ligand>
</feature>
<feature type="binding site" evidence="1">
    <location>
        <position position="129"/>
    </location>
    <ligand>
        <name>phosphoenolpyruvate</name>
        <dbReference type="ChEBI" id="CHEBI:58702"/>
    </ligand>
</feature>
<feature type="binding site" evidence="1">
    <location>
        <position position="175"/>
    </location>
    <ligand>
        <name>3-phosphoshikimate</name>
        <dbReference type="ChEBI" id="CHEBI:145989"/>
    </ligand>
</feature>
<feature type="binding site" evidence="1">
    <location>
        <position position="176"/>
    </location>
    <ligand>
        <name>3-phosphoshikimate</name>
        <dbReference type="ChEBI" id="CHEBI:145989"/>
    </ligand>
</feature>
<feature type="binding site" evidence="1">
    <location>
        <position position="177"/>
    </location>
    <ligand>
        <name>3-phosphoshikimate</name>
        <dbReference type="ChEBI" id="CHEBI:145989"/>
    </ligand>
</feature>
<feature type="binding site" evidence="1">
    <location>
        <position position="177"/>
    </location>
    <ligand>
        <name>phosphoenolpyruvate</name>
        <dbReference type="ChEBI" id="CHEBI:58702"/>
    </ligand>
</feature>
<feature type="binding site" evidence="1">
    <location>
        <position position="203"/>
    </location>
    <ligand>
        <name>3-phosphoshikimate</name>
        <dbReference type="ChEBI" id="CHEBI:145989"/>
    </ligand>
</feature>
<feature type="binding site" evidence="1">
    <location>
        <position position="318"/>
    </location>
    <ligand>
        <name>3-phosphoshikimate</name>
        <dbReference type="ChEBI" id="CHEBI:145989"/>
    </ligand>
</feature>
<feature type="binding site" evidence="1">
    <location>
        <position position="341"/>
    </location>
    <ligand>
        <name>3-phosphoshikimate</name>
        <dbReference type="ChEBI" id="CHEBI:145989"/>
    </ligand>
</feature>
<feature type="binding site" evidence="1">
    <location>
        <position position="345"/>
    </location>
    <ligand>
        <name>3-phosphoshikimate</name>
        <dbReference type="ChEBI" id="CHEBI:145989"/>
    </ligand>
</feature>
<feature type="binding site" evidence="1">
    <location>
        <position position="349"/>
    </location>
    <ligand>
        <name>phosphoenolpyruvate</name>
        <dbReference type="ChEBI" id="CHEBI:58702"/>
    </ligand>
</feature>
<feature type="binding site" evidence="1">
    <location>
        <position position="393"/>
    </location>
    <ligand>
        <name>phosphoenolpyruvate</name>
        <dbReference type="ChEBI" id="CHEBI:58702"/>
    </ligand>
</feature>
<feature type="binding site" evidence="1">
    <location>
        <position position="418"/>
    </location>
    <ligand>
        <name>phosphoenolpyruvate</name>
        <dbReference type="ChEBI" id="CHEBI:58702"/>
    </ligand>
</feature>
<sequence>MEKLTLTPISHVEGTVNLPGSKSLSNRALLLAALAKGTTRVTNLLDSDDVRHMLNALKQLGVNYSLSEDKSVCEVQGLGKAFAWQNGLALFLGNAGTAMRPLTAALCLANADSVPAEIILTGEPRMKERPIKHLVDALLQAGADVQYLEQEGYPPLAIRNTGLKGGKVKIDGSVSSQFLTALLMAAPMAERDTEIEIIGELVSKPYIDITLNMMKIFAVDVDNQNYQRFVVKGNQQYQSPNIFLVEGDASSASYFLAAGAIKGKVRVTGVGKNSIQGDRLFAEVLEKMGAKITWGEDYIEAERGELNGIDMDMNHIPDAAMTIATTALFAQGETVIRNIYNWRVKETDRLSAMATELRKVGAEVEEGEDFIRIQPPASDQFKHAEIETYNDHRMAMCFALVALSNTAVTICDPKCTAKTFPTFFDEFSAIATV</sequence>
<evidence type="ECO:0000255" key="1">
    <source>
        <dbReference type="HAMAP-Rule" id="MF_00210"/>
    </source>
</evidence>
<dbReference type="EC" id="2.5.1.19" evidence="1"/>
<dbReference type="EMBL" id="AE016827">
    <property type="protein sequence ID" value="AAU38182.1"/>
    <property type="molecule type" value="Genomic_DNA"/>
</dbReference>
<dbReference type="RefSeq" id="WP_011200747.1">
    <property type="nucleotide sequence ID" value="NC_006300.1"/>
</dbReference>
<dbReference type="SMR" id="Q65S78"/>
<dbReference type="STRING" id="221988.MS1575"/>
<dbReference type="KEGG" id="msu:MS1575"/>
<dbReference type="eggNOG" id="COG0128">
    <property type="taxonomic scope" value="Bacteria"/>
</dbReference>
<dbReference type="HOGENOM" id="CLU_024321_0_0_6"/>
<dbReference type="OrthoDB" id="9809920at2"/>
<dbReference type="UniPathway" id="UPA00053">
    <property type="reaction ID" value="UER00089"/>
</dbReference>
<dbReference type="Proteomes" id="UP000000607">
    <property type="component" value="Chromosome"/>
</dbReference>
<dbReference type="GO" id="GO:0005737">
    <property type="term" value="C:cytoplasm"/>
    <property type="evidence" value="ECO:0007669"/>
    <property type="project" value="UniProtKB-SubCell"/>
</dbReference>
<dbReference type="GO" id="GO:0003866">
    <property type="term" value="F:3-phosphoshikimate 1-carboxyvinyltransferase activity"/>
    <property type="evidence" value="ECO:0007669"/>
    <property type="project" value="UniProtKB-UniRule"/>
</dbReference>
<dbReference type="GO" id="GO:0008652">
    <property type="term" value="P:amino acid biosynthetic process"/>
    <property type="evidence" value="ECO:0007669"/>
    <property type="project" value="UniProtKB-KW"/>
</dbReference>
<dbReference type="GO" id="GO:0009073">
    <property type="term" value="P:aromatic amino acid family biosynthetic process"/>
    <property type="evidence" value="ECO:0007669"/>
    <property type="project" value="UniProtKB-KW"/>
</dbReference>
<dbReference type="GO" id="GO:0009423">
    <property type="term" value="P:chorismate biosynthetic process"/>
    <property type="evidence" value="ECO:0007669"/>
    <property type="project" value="UniProtKB-UniRule"/>
</dbReference>
<dbReference type="CDD" id="cd01556">
    <property type="entry name" value="EPSP_synthase"/>
    <property type="match status" value="1"/>
</dbReference>
<dbReference type="FunFam" id="3.65.10.10:FF:000003">
    <property type="entry name" value="3-phosphoshikimate 1-carboxyvinyltransferase"/>
    <property type="match status" value="1"/>
</dbReference>
<dbReference type="FunFam" id="3.65.10.10:FF:000004">
    <property type="entry name" value="3-phosphoshikimate 1-carboxyvinyltransferase"/>
    <property type="match status" value="1"/>
</dbReference>
<dbReference type="Gene3D" id="3.65.10.10">
    <property type="entry name" value="Enolpyruvate transferase domain"/>
    <property type="match status" value="2"/>
</dbReference>
<dbReference type="HAMAP" id="MF_00210">
    <property type="entry name" value="EPSP_synth"/>
    <property type="match status" value="1"/>
</dbReference>
<dbReference type="InterPro" id="IPR001986">
    <property type="entry name" value="Enolpyruvate_Tfrase_dom"/>
</dbReference>
<dbReference type="InterPro" id="IPR036968">
    <property type="entry name" value="Enolpyruvate_Tfrase_sf"/>
</dbReference>
<dbReference type="InterPro" id="IPR006264">
    <property type="entry name" value="EPSP_synthase"/>
</dbReference>
<dbReference type="InterPro" id="IPR023193">
    <property type="entry name" value="EPSP_synthase_CS"/>
</dbReference>
<dbReference type="InterPro" id="IPR013792">
    <property type="entry name" value="RNA3'P_cycl/enolpyr_Trfase_a/b"/>
</dbReference>
<dbReference type="NCBIfam" id="TIGR01356">
    <property type="entry name" value="aroA"/>
    <property type="match status" value="1"/>
</dbReference>
<dbReference type="PANTHER" id="PTHR21090">
    <property type="entry name" value="AROM/DEHYDROQUINATE SYNTHASE"/>
    <property type="match status" value="1"/>
</dbReference>
<dbReference type="PANTHER" id="PTHR21090:SF5">
    <property type="entry name" value="PENTAFUNCTIONAL AROM POLYPEPTIDE"/>
    <property type="match status" value="1"/>
</dbReference>
<dbReference type="Pfam" id="PF00275">
    <property type="entry name" value="EPSP_synthase"/>
    <property type="match status" value="1"/>
</dbReference>
<dbReference type="PIRSF" id="PIRSF000505">
    <property type="entry name" value="EPSPS"/>
    <property type="match status" value="1"/>
</dbReference>
<dbReference type="SUPFAM" id="SSF55205">
    <property type="entry name" value="EPT/RTPC-like"/>
    <property type="match status" value="1"/>
</dbReference>
<dbReference type="PROSITE" id="PS00104">
    <property type="entry name" value="EPSP_SYNTHASE_1"/>
    <property type="match status" value="1"/>
</dbReference>
<dbReference type="PROSITE" id="PS00885">
    <property type="entry name" value="EPSP_SYNTHASE_2"/>
    <property type="match status" value="1"/>
</dbReference>
<keyword id="KW-0028">Amino-acid biosynthesis</keyword>
<keyword id="KW-0057">Aromatic amino acid biosynthesis</keyword>
<keyword id="KW-0963">Cytoplasm</keyword>
<keyword id="KW-0808">Transferase</keyword>
<reference key="1">
    <citation type="journal article" date="2004" name="Nat. Biotechnol.">
        <title>The genome sequence of the capnophilic rumen bacterium Mannheimia succiniciproducens.</title>
        <authorList>
            <person name="Hong S.H."/>
            <person name="Kim J.S."/>
            <person name="Lee S.Y."/>
            <person name="In Y.H."/>
            <person name="Choi S.S."/>
            <person name="Rih J.-K."/>
            <person name="Kim C.H."/>
            <person name="Jeong H."/>
            <person name="Hur C.G."/>
            <person name="Kim J.J."/>
        </authorList>
    </citation>
    <scope>NUCLEOTIDE SEQUENCE [LARGE SCALE GENOMIC DNA]</scope>
    <source>
        <strain>KCTC 0769BP / MBEL55E</strain>
    </source>
</reference>
<proteinExistence type="inferred from homology"/>